<comment type="function">
    <text evidence="1 6 7">E3 RING-finger protein, member of the UBC2/RAD6 epistasis group. Associates to the E2 ubiquitin conjugating enzyme ubc2/rad6 to form the ubc2-rad18 ubiquitin ligase complex involved in postreplicative repair (PRR) of damaged DNA (By similarity).</text>
</comment>
<comment type="catalytic activity">
    <reaction>
        <text>S-ubiquitinyl-[E2 ubiquitin-conjugating enzyme]-L-cysteine + [acceptor protein]-L-lysine = [E2 ubiquitin-conjugating enzyme]-L-cysteine + N(6)-ubiquitinyl-[acceptor protein]-L-lysine.</text>
        <dbReference type="EC" id="2.3.2.27"/>
    </reaction>
</comment>
<comment type="pathway">
    <text>Protein modification; protein ubiquitination.</text>
</comment>
<comment type="subunit">
    <text evidence="1">Interacts with E2 ubc2, forming a complex with ubiquitin ligase activity.</text>
</comment>
<comment type="subcellular location">
    <subcellularLocation>
        <location evidence="1">Nucleus</location>
    </subcellularLocation>
</comment>
<comment type="similarity">
    <text evidence="8">Belongs to the RAD18 family.</text>
</comment>
<sequence length="387" mass="43438">MNELDATDPSDWNQTKIPSLKGLDSSLRCLICHEYFRAPLITSCSHTFCSFCIRDYLREHPMCPACRAPEQESRLRKNTILEEILESFKVIRPTLFEFLKVENVPKPVLQAPETVIAQDSASGDEEWEDDLASNSSPASIAKKTSRDSKKRKREDLVHCPACSNLVPHNQINQHLDSCLNSPSSPSSSSSPYKNKDNSKSNSLLSFKTDDDSITKRRLRSFNSADELPLKDRVRLPKLTYALLSESKIRSKLSEMGLPTDGHKQLLQRRHAKWVTLYNSNLDQKQPVSKRNLIRQLIDWERVQSKSIGVEKEKLGGGDWEKAYAEDFADLINRAKQSTTNKNDSLRNTAVESSTEPSTSNGFPATSVSPPLTIDLTNSQTGSDGPQS</sequence>
<dbReference type="EC" id="2.3.2.27"/>
<dbReference type="EMBL" id="AB079544">
    <property type="protein sequence ID" value="BAB84669.1"/>
    <property type="molecule type" value="Genomic_DNA"/>
</dbReference>
<dbReference type="EMBL" id="CU329671">
    <property type="protein sequence ID" value="CAA21300.1"/>
    <property type="molecule type" value="Genomic_DNA"/>
</dbReference>
<dbReference type="PIR" id="T39653">
    <property type="entry name" value="T39653"/>
</dbReference>
<dbReference type="RefSeq" id="NP_595423.1">
    <property type="nucleotide sequence ID" value="NM_001021331.2"/>
</dbReference>
<dbReference type="SMR" id="O74747"/>
<dbReference type="BioGRID" id="276241">
    <property type="interactions" value="57"/>
</dbReference>
<dbReference type="FunCoup" id="O74747">
    <property type="interactions" value="190"/>
</dbReference>
<dbReference type="IntAct" id="O74747">
    <property type="interactions" value="2"/>
</dbReference>
<dbReference type="MINT" id="O74747"/>
<dbReference type="STRING" id="284812.O74747"/>
<dbReference type="iPTMnet" id="O74747"/>
<dbReference type="SwissPalm" id="O74747"/>
<dbReference type="PaxDb" id="4896-SPBC1734.06.1"/>
<dbReference type="EnsemblFungi" id="SPBC1734.06.1">
    <property type="protein sequence ID" value="SPBC1734.06.1:pep"/>
    <property type="gene ID" value="SPBC1734.06"/>
</dbReference>
<dbReference type="GeneID" id="2539686"/>
<dbReference type="KEGG" id="spo:2539686"/>
<dbReference type="PomBase" id="SPBC1734.06">
    <property type="gene designation" value="rhp18"/>
</dbReference>
<dbReference type="VEuPathDB" id="FungiDB:SPBC1734.06"/>
<dbReference type="eggNOG" id="KOG0287">
    <property type="taxonomic scope" value="Eukaryota"/>
</dbReference>
<dbReference type="HOGENOM" id="CLU_028491_2_0_1"/>
<dbReference type="InParanoid" id="O74747"/>
<dbReference type="OMA" id="IPNTGPR"/>
<dbReference type="PhylomeDB" id="O74747"/>
<dbReference type="Reactome" id="R-SPO-110314">
    <property type="pathway name" value="Recognition of DNA damage by PCNA-containing replication complex"/>
</dbReference>
<dbReference type="Reactome" id="R-SPO-8866654">
    <property type="pathway name" value="E3 ubiquitin ligases ubiquitinate target proteins"/>
</dbReference>
<dbReference type="UniPathway" id="UPA00143"/>
<dbReference type="PRO" id="PR:O74747"/>
<dbReference type="Proteomes" id="UP000002485">
    <property type="component" value="Chromosome II"/>
</dbReference>
<dbReference type="GO" id="GO:0000785">
    <property type="term" value="C:chromatin"/>
    <property type="evidence" value="ECO:0000305"/>
    <property type="project" value="PomBase"/>
</dbReference>
<dbReference type="GO" id="GO:0005634">
    <property type="term" value="C:nucleus"/>
    <property type="evidence" value="ECO:0000318"/>
    <property type="project" value="GO_Central"/>
</dbReference>
<dbReference type="GO" id="GO:0097505">
    <property type="term" value="C:Rad6-Rad18 complex"/>
    <property type="evidence" value="ECO:0000318"/>
    <property type="project" value="GO_Central"/>
</dbReference>
<dbReference type="GO" id="GO:0003697">
    <property type="term" value="F:single-stranded DNA binding"/>
    <property type="evidence" value="ECO:0007669"/>
    <property type="project" value="InterPro"/>
</dbReference>
<dbReference type="GO" id="GO:0061630">
    <property type="term" value="F:ubiquitin protein ligase activity"/>
    <property type="evidence" value="ECO:0007669"/>
    <property type="project" value="InterPro"/>
</dbReference>
<dbReference type="GO" id="GO:0008270">
    <property type="term" value="F:zinc ion binding"/>
    <property type="evidence" value="ECO:0007669"/>
    <property type="project" value="UniProtKB-KW"/>
</dbReference>
<dbReference type="GO" id="GO:0036297">
    <property type="term" value="P:interstrand cross-link repair"/>
    <property type="evidence" value="ECO:0000315"/>
    <property type="project" value="PomBase"/>
</dbReference>
<dbReference type="GO" id="GO:0006301">
    <property type="term" value="P:postreplication repair"/>
    <property type="evidence" value="ECO:0000315"/>
    <property type="project" value="PomBase"/>
</dbReference>
<dbReference type="GO" id="GO:0006513">
    <property type="term" value="P:protein monoubiquitination"/>
    <property type="evidence" value="ECO:0000318"/>
    <property type="project" value="GO_Central"/>
</dbReference>
<dbReference type="CDD" id="cd16529">
    <property type="entry name" value="RING-HC_RAD18"/>
    <property type="match status" value="1"/>
</dbReference>
<dbReference type="FunFam" id="3.30.40.10:FF:000172">
    <property type="entry name" value="E3 ubiquitin-protein ligase RAD18"/>
    <property type="match status" value="1"/>
</dbReference>
<dbReference type="Gene3D" id="3.30.160.60">
    <property type="entry name" value="Classic Zinc Finger"/>
    <property type="match status" value="1"/>
</dbReference>
<dbReference type="Gene3D" id="3.30.40.10">
    <property type="entry name" value="Zinc/RING finger domain, C3HC4 (zinc finger)"/>
    <property type="match status" value="1"/>
</dbReference>
<dbReference type="InterPro" id="IPR039577">
    <property type="entry name" value="Rad18"/>
</dbReference>
<dbReference type="InterPro" id="IPR004580">
    <property type="entry name" value="Rad18_fungi"/>
</dbReference>
<dbReference type="InterPro" id="IPR006642">
    <property type="entry name" value="Rad18_UBZ4"/>
</dbReference>
<dbReference type="InterPro" id="IPR003034">
    <property type="entry name" value="SAP_dom"/>
</dbReference>
<dbReference type="InterPro" id="IPR001841">
    <property type="entry name" value="Znf_RING"/>
</dbReference>
<dbReference type="InterPro" id="IPR013083">
    <property type="entry name" value="Znf_RING/FYVE/PHD"/>
</dbReference>
<dbReference type="InterPro" id="IPR017907">
    <property type="entry name" value="Znf_RING_CS"/>
</dbReference>
<dbReference type="NCBIfam" id="TIGR00599">
    <property type="entry name" value="rad18"/>
    <property type="match status" value="1"/>
</dbReference>
<dbReference type="PANTHER" id="PTHR14134">
    <property type="entry name" value="E3 UBIQUITIN-PROTEIN LIGASE RAD18"/>
    <property type="match status" value="1"/>
</dbReference>
<dbReference type="PANTHER" id="PTHR14134:SF2">
    <property type="entry name" value="E3 UBIQUITIN-PROTEIN LIGASE RAD18"/>
    <property type="match status" value="1"/>
</dbReference>
<dbReference type="Pfam" id="PF02037">
    <property type="entry name" value="SAP"/>
    <property type="match status" value="1"/>
</dbReference>
<dbReference type="Pfam" id="PF13923">
    <property type="entry name" value="zf-C3HC4_2"/>
    <property type="match status" value="1"/>
</dbReference>
<dbReference type="SMART" id="SM00184">
    <property type="entry name" value="RING"/>
    <property type="match status" value="1"/>
</dbReference>
<dbReference type="SMART" id="SM00513">
    <property type="entry name" value="SAP"/>
    <property type="match status" value="1"/>
</dbReference>
<dbReference type="SMART" id="SM00734">
    <property type="entry name" value="ZnF_Rad18"/>
    <property type="match status" value="1"/>
</dbReference>
<dbReference type="SUPFAM" id="SSF57850">
    <property type="entry name" value="RING/U-box"/>
    <property type="match status" value="1"/>
</dbReference>
<dbReference type="PROSITE" id="PS50800">
    <property type="entry name" value="SAP"/>
    <property type="match status" value="1"/>
</dbReference>
<dbReference type="PROSITE" id="PS00518">
    <property type="entry name" value="ZF_RING_1"/>
    <property type="match status" value="1"/>
</dbReference>
<dbReference type="PROSITE" id="PS50089">
    <property type="entry name" value="ZF_RING_2"/>
    <property type="match status" value="1"/>
</dbReference>
<dbReference type="PROSITE" id="PS51908">
    <property type="entry name" value="ZF_UBZ4"/>
    <property type="match status" value="1"/>
</dbReference>
<proteinExistence type="inferred from homology"/>
<gene>
    <name type="primary">rhp18</name>
    <name type="ORF">SPBC1734.06</name>
</gene>
<reference key="1">
    <citation type="journal article" date="2001" name="Dev. Cell">
        <title>Phosphorylation of Mei2 and Ste11 by Pat1 kinase inhibits sexual differentiation via ubiquitin proteolysis and 14-3-3 protein in fission yeast.</title>
        <authorList>
            <person name="Kitamura K."/>
            <person name="Katayama S."/>
            <person name="Dhut S."/>
            <person name="Sato M."/>
            <person name="Watanabe Y."/>
            <person name="Yamamoto M."/>
            <person name="Toda T."/>
        </authorList>
    </citation>
    <scope>NUCLEOTIDE SEQUENCE [GENOMIC DNA]</scope>
    <scope>FUNCTION</scope>
</reference>
<reference key="2">
    <citation type="journal article" date="2002" name="Nature">
        <title>The genome sequence of Schizosaccharomyces pombe.</title>
        <authorList>
            <person name="Wood V."/>
            <person name="Gwilliam R."/>
            <person name="Rajandream M.A."/>
            <person name="Lyne M.H."/>
            <person name="Lyne R."/>
            <person name="Stewart A."/>
            <person name="Sgouros J.G."/>
            <person name="Peat N."/>
            <person name="Hayles J."/>
            <person name="Baker S.G."/>
            <person name="Basham D."/>
            <person name="Bowman S."/>
            <person name="Brooks K."/>
            <person name="Brown D."/>
            <person name="Brown S."/>
            <person name="Chillingworth T."/>
            <person name="Churcher C.M."/>
            <person name="Collins M."/>
            <person name="Connor R."/>
            <person name="Cronin A."/>
            <person name="Davis P."/>
            <person name="Feltwell T."/>
            <person name="Fraser A."/>
            <person name="Gentles S."/>
            <person name="Goble A."/>
            <person name="Hamlin N."/>
            <person name="Harris D.E."/>
            <person name="Hidalgo J."/>
            <person name="Hodgson G."/>
            <person name="Holroyd S."/>
            <person name="Hornsby T."/>
            <person name="Howarth S."/>
            <person name="Huckle E.J."/>
            <person name="Hunt S."/>
            <person name="Jagels K."/>
            <person name="James K.D."/>
            <person name="Jones L."/>
            <person name="Jones M."/>
            <person name="Leather S."/>
            <person name="McDonald S."/>
            <person name="McLean J."/>
            <person name="Mooney P."/>
            <person name="Moule S."/>
            <person name="Mungall K.L."/>
            <person name="Murphy L.D."/>
            <person name="Niblett D."/>
            <person name="Odell C."/>
            <person name="Oliver K."/>
            <person name="O'Neil S."/>
            <person name="Pearson D."/>
            <person name="Quail M.A."/>
            <person name="Rabbinowitsch E."/>
            <person name="Rutherford K.M."/>
            <person name="Rutter S."/>
            <person name="Saunders D."/>
            <person name="Seeger K."/>
            <person name="Sharp S."/>
            <person name="Skelton J."/>
            <person name="Simmonds M.N."/>
            <person name="Squares R."/>
            <person name="Squares S."/>
            <person name="Stevens K."/>
            <person name="Taylor K."/>
            <person name="Taylor R.G."/>
            <person name="Tivey A."/>
            <person name="Walsh S.V."/>
            <person name="Warren T."/>
            <person name="Whitehead S."/>
            <person name="Woodward J.R."/>
            <person name="Volckaert G."/>
            <person name="Aert R."/>
            <person name="Robben J."/>
            <person name="Grymonprez B."/>
            <person name="Weltjens I."/>
            <person name="Vanstreels E."/>
            <person name="Rieger M."/>
            <person name="Schaefer M."/>
            <person name="Mueller-Auer S."/>
            <person name="Gabel C."/>
            <person name="Fuchs M."/>
            <person name="Duesterhoeft A."/>
            <person name="Fritzc C."/>
            <person name="Holzer E."/>
            <person name="Moestl D."/>
            <person name="Hilbert H."/>
            <person name="Borzym K."/>
            <person name="Langer I."/>
            <person name="Beck A."/>
            <person name="Lehrach H."/>
            <person name="Reinhardt R."/>
            <person name="Pohl T.M."/>
            <person name="Eger P."/>
            <person name="Zimmermann W."/>
            <person name="Wedler H."/>
            <person name="Wambutt R."/>
            <person name="Purnelle B."/>
            <person name="Goffeau A."/>
            <person name="Cadieu E."/>
            <person name="Dreano S."/>
            <person name="Gloux S."/>
            <person name="Lelaure V."/>
            <person name="Mottier S."/>
            <person name="Galibert F."/>
            <person name="Aves S.J."/>
            <person name="Xiang Z."/>
            <person name="Hunt C."/>
            <person name="Moore K."/>
            <person name="Hurst S.M."/>
            <person name="Lucas M."/>
            <person name="Rochet M."/>
            <person name="Gaillardin C."/>
            <person name="Tallada V.A."/>
            <person name="Garzon A."/>
            <person name="Thode G."/>
            <person name="Daga R.R."/>
            <person name="Cruzado L."/>
            <person name="Jimenez J."/>
            <person name="Sanchez M."/>
            <person name="del Rey F."/>
            <person name="Benito J."/>
            <person name="Dominguez A."/>
            <person name="Revuelta J.L."/>
            <person name="Moreno S."/>
            <person name="Armstrong J."/>
            <person name="Forsburg S.L."/>
            <person name="Cerutti L."/>
            <person name="Lowe T."/>
            <person name="McCombie W.R."/>
            <person name="Paulsen I."/>
            <person name="Potashkin J."/>
            <person name="Shpakovski G.V."/>
            <person name="Ussery D."/>
            <person name="Barrell B.G."/>
            <person name="Nurse P."/>
        </authorList>
    </citation>
    <scope>NUCLEOTIDE SEQUENCE [LARGE SCALE GENOMIC DNA]</scope>
    <source>
        <strain>972 / ATCC 24843</strain>
    </source>
</reference>
<reference key="3">
    <citation type="journal article" date="2001" name="Mol. Genet. Genomics">
        <title>A homologue of the Rad18 postreplication repair gene is required for DNA damage responses throughout the fission yeast cell cycle.</title>
        <authorList>
            <person name="Verkade H.M."/>
            <person name="Teli T."/>
            <person name="Laursen L.V."/>
            <person name="Murray J.M."/>
            <person name="O'Connell M.J."/>
        </authorList>
    </citation>
    <scope>FUNCTION</scope>
</reference>
<feature type="chain" id="PRO_0000056159" description="Postreplication repair E3 ubiquitin-protein ligase rad18">
    <location>
        <begin position="1"/>
        <end position="387"/>
    </location>
</feature>
<feature type="domain" description="SAP" evidence="3">
    <location>
        <begin position="240"/>
        <end position="274"/>
    </location>
</feature>
<feature type="zinc finger region" description="RING-type" evidence="2">
    <location>
        <begin position="29"/>
        <end position="67"/>
    </location>
</feature>
<feature type="zinc finger region" description="UBZ4-type" evidence="4">
    <location>
        <begin position="156"/>
        <end position="183"/>
    </location>
</feature>
<feature type="region of interest" description="Disordered" evidence="5">
    <location>
        <begin position="119"/>
        <end position="153"/>
    </location>
</feature>
<feature type="region of interest" description="Disordered" evidence="5">
    <location>
        <begin position="174"/>
        <end position="206"/>
    </location>
</feature>
<feature type="region of interest" description="Disordered" evidence="5">
    <location>
        <begin position="335"/>
        <end position="387"/>
    </location>
</feature>
<feature type="compositionally biased region" description="Acidic residues" evidence="5">
    <location>
        <begin position="122"/>
        <end position="131"/>
    </location>
</feature>
<feature type="compositionally biased region" description="Low complexity" evidence="5">
    <location>
        <begin position="177"/>
        <end position="192"/>
    </location>
</feature>
<feature type="binding site" evidence="4">
    <location>
        <position position="159"/>
    </location>
    <ligand>
        <name>Zn(2+)</name>
        <dbReference type="ChEBI" id="CHEBI:29105"/>
    </ligand>
</feature>
<feature type="binding site" evidence="4">
    <location>
        <position position="162"/>
    </location>
    <ligand>
        <name>Zn(2+)</name>
        <dbReference type="ChEBI" id="CHEBI:29105"/>
    </ligand>
</feature>
<feature type="binding site" evidence="4">
    <location>
        <position position="174"/>
    </location>
    <ligand>
        <name>Zn(2+)</name>
        <dbReference type="ChEBI" id="CHEBI:29105"/>
    </ligand>
</feature>
<feature type="binding site" evidence="4">
    <location>
        <position position="178"/>
    </location>
    <ligand>
        <name>Zn(2+)</name>
        <dbReference type="ChEBI" id="CHEBI:29105"/>
    </ligand>
</feature>
<name>RAD18_SCHPO</name>
<organism>
    <name type="scientific">Schizosaccharomyces pombe (strain 972 / ATCC 24843)</name>
    <name type="common">Fission yeast</name>
    <dbReference type="NCBI Taxonomy" id="284812"/>
    <lineage>
        <taxon>Eukaryota</taxon>
        <taxon>Fungi</taxon>
        <taxon>Dikarya</taxon>
        <taxon>Ascomycota</taxon>
        <taxon>Taphrinomycotina</taxon>
        <taxon>Schizosaccharomycetes</taxon>
        <taxon>Schizosaccharomycetales</taxon>
        <taxon>Schizosaccharomycetaceae</taxon>
        <taxon>Schizosaccharomyces</taxon>
    </lineage>
</organism>
<accession>O74747</accession>
<keyword id="KW-0227">DNA damage</keyword>
<keyword id="KW-0234">DNA repair</keyword>
<keyword id="KW-0238">DNA-binding</keyword>
<keyword id="KW-0479">Metal-binding</keyword>
<keyword id="KW-0539">Nucleus</keyword>
<keyword id="KW-1185">Reference proteome</keyword>
<keyword id="KW-0808">Transferase</keyword>
<keyword id="KW-0833">Ubl conjugation pathway</keyword>
<keyword id="KW-0862">Zinc</keyword>
<keyword id="KW-0863">Zinc-finger</keyword>
<evidence type="ECO:0000250" key="1"/>
<evidence type="ECO:0000255" key="2">
    <source>
        <dbReference type="PROSITE-ProRule" id="PRU00175"/>
    </source>
</evidence>
<evidence type="ECO:0000255" key="3">
    <source>
        <dbReference type="PROSITE-ProRule" id="PRU00186"/>
    </source>
</evidence>
<evidence type="ECO:0000255" key="4">
    <source>
        <dbReference type="PROSITE-ProRule" id="PRU01256"/>
    </source>
</evidence>
<evidence type="ECO:0000256" key="5">
    <source>
        <dbReference type="SAM" id="MobiDB-lite"/>
    </source>
</evidence>
<evidence type="ECO:0000269" key="6">
    <source>
    </source>
</evidence>
<evidence type="ECO:0000269" key="7">
    <source>
    </source>
</evidence>
<evidence type="ECO:0000305" key="8"/>
<protein>
    <recommendedName>
        <fullName>Postreplication repair E3 ubiquitin-protein ligase rad18</fullName>
        <ecNumber>2.3.2.27</ecNumber>
    </recommendedName>
    <alternativeName>
        <fullName>RAD18 homolog</fullName>
    </alternativeName>
    <alternativeName>
        <fullName evidence="8">RING-type E3 ubiquitin transferase rad18</fullName>
    </alternativeName>
</protein>